<gene>
    <name type="ordered locus">AF_1860</name>
</gene>
<reference key="1">
    <citation type="journal article" date="1997" name="Nature">
        <title>The complete genome sequence of the hyperthermophilic, sulphate-reducing archaeon Archaeoglobus fulgidus.</title>
        <authorList>
            <person name="Klenk H.-P."/>
            <person name="Clayton R.A."/>
            <person name="Tomb J.-F."/>
            <person name="White O."/>
            <person name="Nelson K.E."/>
            <person name="Ketchum K.A."/>
            <person name="Dodson R.J."/>
            <person name="Gwinn M.L."/>
            <person name="Hickey E.K."/>
            <person name="Peterson J.D."/>
            <person name="Richardson D.L."/>
            <person name="Kerlavage A.R."/>
            <person name="Graham D.E."/>
            <person name="Kyrpides N.C."/>
            <person name="Fleischmann R.D."/>
            <person name="Quackenbush J."/>
            <person name="Lee N.H."/>
            <person name="Sutton G.G."/>
            <person name="Gill S.R."/>
            <person name="Kirkness E.F."/>
            <person name="Dougherty B.A."/>
            <person name="McKenney K."/>
            <person name="Adams M.D."/>
            <person name="Loftus B.J."/>
            <person name="Peterson S.N."/>
            <person name="Reich C.I."/>
            <person name="McNeil L.K."/>
            <person name="Badger J.H."/>
            <person name="Glodek A."/>
            <person name="Zhou L."/>
            <person name="Overbeek R."/>
            <person name="Gocayne J.D."/>
            <person name="Weidman J.F."/>
            <person name="McDonald L.A."/>
            <person name="Utterback T.R."/>
            <person name="Cotton M.D."/>
            <person name="Spriggs T."/>
            <person name="Artiach P."/>
            <person name="Kaine B.P."/>
            <person name="Sykes S.M."/>
            <person name="Sadow P.W."/>
            <person name="D'Andrea K.P."/>
            <person name="Bowman C."/>
            <person name="Fujii C."/>
            <person name="Garland S.A."/>
            <person name="Mason T.M."/>
            <person name="Olsen G.J."/>
            <person name="Fraser C.M."/>
            <person name="Smith H.O."/>
            <person name="Woese C.R."/>
            <person name="Venter J.C."/>
        </authorList>
    </citation>
    <scope>NUCLEOTIDE SEQUENCE [LARGE SCALE GENOMIC DNA]</scope>
    <source>
        <strain>ATCC 49558 / DSM 4304 / JCM 9628 / NBRC 100126 / VC-16</strain>
    </source>
</reference>
<proteinExistence type="predicted"/>
<keyword id="KW-1185">Reference proteome</keyword>
<name>Y1860_ARCFU</name>
<protein>
    <recommendedName>
        <fullName>Uncharacterized protein AF_1860</fullName>
    </recommendedName>
</protein>
<accession>O28419</accession>
<feature type="chain" id="PRO_0000128066" description="Uncharacterized protein AF_1860">
    <location>
        <begin position="1"/>
        <end position="57"/>
    </location>
</feature>
<organism>
    <name type="scientific">Archaeoglobus fulgidus (strain ATCC 49558 / DSM 4304 / JCM 9628 / NBRC 100126 / VC-16)</name>
    <dbReference type="NCBI Taxonomy" id="224325"/>
    <lineage>
        <taxon>Archaea</taxon>
        <taxon>Methanobacteriati</taxon>
        <taxon>Methanobacteriota</taxon>
        <taxon>Archaeoglobi</taxon>
        <taxon>Archaeoglobales</taxon>
        <taxon>Archaeoglobaceae</taxon>
        <taxon>Archaeoglobus</taxon>
    </lineage>
</organism>
<dbReference type="EMBL" id="AE000782">
    <property type="protein sequence ID" value="AAB89397.1"/>
    <property type="molecule type" value="Genomic_DNA"/>
</dbReference>
<dbReference type="PIR" id="C69482">
    <property type="entry name" value="C69482"/>
</dbReference>
<dbReference type="SMR" id="O28419"/>
<dbReference type="STRING" id="224325.AF_1860"/>
<dbReference type="PaxDb" id="224325-AF_1860"/>
<dbReference type="EnsemblBacteria" id="AAB89397">
    <property type="protein sequence ID" value="AAB89397"/>
    <property type="gene ID" value="AF_1860"/>
</dbReference>
<dbReference type="KEGG" id="afu:AF_1860"/>
<dbReference type="HOGENOM" id="CLU_2985456_0_0_2"/>
<dbReference type="Proteomes" id="UP000002199">
    <property type="component" value="Chromosome"/>
</dbReference>
<dbReference type="Gene3D" id="1.20.120.580">
    <property type="entry name" value="bsu32300-like"/>
    <property type="match status" value="1"/>
</dbReference>
<dbReference type="InterPro" id="IPR037038">
    <property type="entry name" value="HepT-like_sf"/>
</dbReference>
<sequence length="57" mass="6449">MALDRVDRNIIEGKIDIIETAHIISSLGLERAESYSEMFEILGKTGIIVKNSLQNRF</sequence>